<protein>
    <recommendedName>
        <fullName>ATP synthase subunit C, plastid</fullName>
    </recommendedName>
    <alternativeName>
        <fullName>ATP synthase F0 sector subunit C</fullName>
    </alternativeName>
    <alternativeName>
        <fullName evidence="1">ATPase subunit III</fullName>
    </alternativeName>
    <alternativeName>
        <fullName evidence="1">Lipid-binding protein</fullName>
    </alternativeName>
</protein>
<geneLocation type="plastid"/>
<keyword id="KW-0066">ATP synthesis</keyword>
<keyword id="KW-0138">CF(0)</keyword>
<keyword id="KW-0375">Hydrogen ion transport</keyword>
<keyword id="KW-0406">Ion transport</keyword>
<keyword id="KW-0446">Lipid-binding</keyword>
<keyword id="KW-0472">Membrane</keyword>
<keyword id="KW-0934">Plastid</keyword>
<keyword id="KW-0812">Transmembrane</keyword>
<keyword id="KW-1133">Transmembrane helix</keyword>
<keyword id="KW-0813">Transport</keyword>
<comment type="function">
    <text evidence="1">F(1)F(0) ATP synthase produces ATP from ADP in the presence of a proton or sodium gradient. F-type ATPases consist of two structural domains, F(1) containing the extramembraneous catalytic core and F(0) containing the membrane proton channel, linked together by a central stalk and a peripheral stalk. During catalysis, ATP synthesis in the catalytic domain of F(1) is coupled via a rotary mechanism of the central stalk subunits to proton translocation.</text>
</comment>
<comment type="function">
    <text evidence="1">Key component of the F(0) channel; it plays a direct role in translocation across the membrane. A homomeric c-ring of between 10-14 subunits forms the central stalk rotor element with the F(1) delta and epsilon subunits.</text>
</comment>
<comment type="subunit">
    <text evidence="1">F-type ATPases have 2 components, F(1) - the catalytic core - and F(0) - the membrane proton channel. F(1) has five subunits: alpha(3), beta(3), gamma(1), delta(1), epsilon(1). F(0) has four main subunits: a(1), b(1), b'(1) and c(10-14). The alpha and beta chains form an alternating ring which encloses part of the gamma chain. F(1) is attached to F(0) by a central stalk formed by the gamma and epsilon chains, while a peripheral stalk is formed by the delta, b and b' chains.</text>
</comment>
<comment type="subcellular location">
    <subcellularLocation>
        <location evidence="2">Plastid membrane</location>
        <topology evidence="1">Multi-pass membrane protein</topology>
    </subcellularLocation>
</comment>
<comment type="similarity">
    <text evidence="1">Belongs to the ATPase C chain family.</text>
</comment>
<comment type="caution">
    <text evidence="2">Young tissue from this organism is photosynthetic and contains some thylakoids, although the photosynthetic activity does not exceed the light compensation point.</text>
</comment>
<sequence length="81" mass="7990">MNPLISAASVIAAGLAVGLASIGPGVGQGTAAGQAVEGIARQPEAEGKIRGTLLLSLAFMEALTIYGLVVALALLFANPFV</sequence>
<accession>A8W3B1</accession>
<organism>
    <name type="scientific">Cuscuta exaltata</name>
    <name type="common">Tall dodder</name>
    <dbReference type="NCBI Taxonomy" id="476139"/>
    <lineage>
        <taxon>Eukaryota</taxon>
        <taxon>Viridiplantae</taxon>
        <taxon>Streptophyta</taxon>
        <taxon>Embryophyta</taxon>
        <taxon>Tracheophyta</taxon>
        <taxon>Spermatophyta</taxon>
        <taxon>Magnoliopsida</taxon>
        <taxon>eudicotyledons</taxon>
        <taxon>Gunneridae</taxon>
        <taxon>Pentapetalae</taxon>
        <taxon>asterids</taxon>
        <taxon>lamiids</taxon>
        <taxon>Solanales</taxon>
        <taxon>Convolvulaceae</taxon>
        <taxon>Cuscuteae</taxon>
        <taxon>Cuscuta</taxon>
        <taxon>Cuscuta subgen. Monogynella</taxon>
    </lineage>
</organism>
<evidence type="ECO:0000255" key="1">
    <source>
        <dbReference type="HAMAP-Rule" id="MF_01396"/>
    </source>
</evidence>
<evidence type="ECO:0000305" key="2"/>
<feature type="chain" id="PRO_0000362906" description="ATP synthase subunit C, plastid">
    <location>
        <begin position="1"/>
        <end position="81"/>
    </location>
</feature>
<feature type="transmembrane region" description="Helical" evidence="1">
    <location>
        <begin position="3"/>
        <end position="23"/>
    </location>
</feature>
<feature type="transmembrane region" description="Helical" evidence="1">
    <location>
        <begin position="57"/>
        <end position="77"/>
    </location>
</feature>
<feature type="site" description="Reversibly protonated during proton transport" evidence="1">
    <location>
        <position position="61"/>
    </location>
</feature>
<gene>
    <name evidence="1" type="primary">atpE</name>
    <name evidence="1" type="synonym">atpH</name>
</gene>
<reference key="1">
    <citation type="journal article" date="2007" name="BMC Plant Biol.">
        <title>Complete plastid genome sequences suggest strong selection for retention of photosynthetic genes in the parasitic plant genus Cuscuta.</title>
        <authorList>
            <person name="McNeal J.R."/>
            <person name="Kuehl J.V."/>
            <person name="Boore J.L."/>
            <person name="dePamphilis C.W."/>
        </authorList>
    </citation>
    <scope>NUCLEOTIDE SEQUENCE [LARGE SCALE GENOMIC DNA]</scope>
</reference>
<name>ATPH_CUSEX</name>
<dbReference type="EMBL" id="EU189132">
    <property type="protein sequence ID" value="ABW83682.1"/>
    <property type="molecule type" value="Genomic_DNA"/>
</dbReference>
<dbReference type="RefSeq" id="YP_001542518.1">
    <property type="nucleotide sequence ID" value="NC_009963.1"/>
</dbReference>
<dbReference type="SMR" id="A8W3B1"/>
<dbReference type="GeneID" id="5729611"/>
<dbReference type="GO" id="GO:0009535">
    <property type="term" value="C:chloroplast thylakoid membrane"/>
    <property type="evidence" value="ECO:0007669"/>
    <property type="project" value="TreeGrafter"/>
</dbReference>
<dbReference type="GO" id="GO:0005886">
    <property type="term" value="C:plasma membrane"/>
    <property type="evidence" value="ECO:0007669"/>
    <property type="project" value="UniProtKB-UniRule"/>
</dbReference>
<dbReference type="GO" id="GO:0045259">
    <property type="term" value="C:proton-transporting ATP synthase complex"/>
    <property type="evidence" value="ECO:0007669"/>
    <property type="project" value="UniProtKB-KW"/>
</dbReference>
<dbReference type="GO" id="GO:0033177">
    <property type="term" value="C:proton-transporting two-sector ATPase complex, proton-transporting domain"/>
    <property type="evidence" value="ECO:0007669"/>
    <property type="project" value="InterPro"/>
</dbReference>
<dbReference type="GO" id="GO:0008289">
    <property type="term" value="F:lipid binding"/>
    <property type="evidence" value="ECO:0007669"/>
    <property type="project" value="UniProtKB-KW"/>
</dbReference>
<dbReference type="GO" id="GO:0046933">
    <property type="term" value="F:proton-transporting ATP synthase activity, rotational mechanism"/>
    <property type="evidence" value="ECO:0007669"/>
    <property type="project" value="UniProtKB-UniRule"/>
</dbReference>
<dbReference type="CDD" id="cd18183">
    <property type="entry name" value="ATP-synt_Fo_c_ATPH"/>
    <property type="match status" value="1"/>
</dbReference>
<dbReference type="FunFam" id="1.20.20.10:FF:000001">
    <property type="entry name" value="ATP synthase subunit c, chloroplastic"/>
    <property type="match status" value="1"/>
</dbReference>
<dbReference type="Gene3D" id="1.20.20.10">
    <property type="entry name" value="F1F0 ATP synthase subunit C"/>
    <property type="match status" value="1"/>
</dbReference>
<dbReference type="HAMAP" id="MF_01396">
    <property type="entry name" value="ATP_synth_c_bact"/>
    <property type="match status" value="1"/>
</dbReference>
<dbReference type="InterPro" id="IPR005953">
    <property type="entry name" value="ATP_synth_csu_bac/chlpt"/>
</dbReference>
<dbReference type="InterPro" id="IPR000454">
    <property type="entry name" value="ATP_synth_F0_csu"/>
</dbReference>
<dbReference type="InterPro" id="IPR020537">
    <property type="entry name" value="ATP_synth_F0_csu_DDCD_BS"/>
</dbReference>
<dbReference type="InterPro" id="IPR038662">
    <property type="entry name" value="ATP_synth_F0_csu_sf"/>
</dbReference>
<dbReference type="InterPro" id="IPR002379">
    <property type="entry name" value="ATPase_proteolipid_c-like_dom"/>
</dbReference>
<dbReference type="InterPro" id="IPR035921">
    <property type="entry name" value="F/V-ATP_Csub_sf"/>
</dbReference>
<dbReference type="NCBIfam" id="TIGR01260">
    <property type="entry name" value="ATP_synt_c"/>
    <property type="match status" value="1"/>
</dbReference>
<dbReference type="NCBIfam" id="NF005608">
    <property type="entry name" value="PRK07354.1"/>
    <property type="match status" value="1"/>
</dbReference>
<dbReference type="PANTHER" id="PTHR10031">
    <property type="entry name" value="ATP SYNTHASE LIPID-BINDING PROTEIN, MITOCHONDRIAL"/>
    <property type="match status" value="1"/>
</dbReference>
<dbReference type="PANTHER" id="PTHR10031:SF0">
    <property type="entry name" value="ATPASE PROTEIN 9"/>
    <property type="match status" value="1"/>
</dbReference>
<dbReference type="Pfam" id="PF00137">
    <property type="entry name" value="ATP-synt_C"/>
    <property type="match status" value="1"/>
</dbReference>
<dbReference type="PRINTS" id="PR00124">
    <property type="entry name" value="ATPASEC"/>
</dbReference>
<dbReference type="SUPFAM" id="SSF81333">
    <property type="entry name" value="F1F0 ATP synthase subunit C"/>
    <property type="match status" value="1"/>
</dbReference>
<dbReference type="PROSITE" id="PS00605">
    <property type="entry name" value="ATPASE_C"/>
    <property type="match status" value="1"/>
</dbReference>
<proteinExistence type="inferred from homology"/>